<name>ATPF1_ROSDO</name>
<proteinExistence type="inferred from homology"/>
<comment type="function">
    <text evidence="1">F(1)F(0) ATP synthase produces ATP from ADP in the presence of a proton or sodium gradient. F-type ATPases consist of two structural domains, F(1) containing the extramembraneous catalytic core and F(0) containing the membrane proton channel, linked together by a central stalk and a peripheral stalk. During catalysis, ATP synthesis in the catalytic domain of F(1) is coupled via a rotary mechanism of the central stalk subunits to proton translocation.</text>
</comment>
<comment type="function">
    <text evidence="1">Component of the F(0) channel, it forms part of the peripheral stalk, linking F(1) to F(0).</text>
</comment>
<comment type="subunit">
    <text evidence="1">F-type ATPases have 2 components, F(1) - the catalytic core - and F(0) - the membrane proton channel. F(1) has five subunits: alpha(3), beta(3), gamma(1), delta(1), epsilon(1). F(0) has three main subunits: a(1), b(2) and c(10-14). The alpha and beta chains form an alternating ring which encloses part of the gamma chain. F(1) is attached to F(0) by a central stalk formed by the gamma and epsilon chains, while a peripheral stalk is formed by the delta and b chains.</text>
</comment>
<comment type="subcellular location">
    <subcellularLocation>
        <location evidence="1">Cell inner membrane</location>
        <topology evidence="1">Single-pass membrane protein</topology>
    </subcellularLocation>
</comment>
<comment type="similarity">
    <text evidence="1">Belongs to the ATPase B chain family.</text>
</comment>
<accession>Q16AM5</accession>
<keyword id="KW-0066">ATP synthesis</keyword>
<keyword id="KW-0997">Cell inner membrane</keyword>
<keyword id="KW-1003">Cell membrane</keyword>
<keyword id="KW-0138">CF(0)</keyword>
<keyword id="KW-0375">Hydrogen ion transport</keyword>
<keyword id="KW-0406">Ion transport</keyword>
<keyword id="KW-0472">Membrane</keyword>
<keyword id="KW-1185">Reference proteome</keyword>
<keyword id="KW-0812">Transmembrane</keyword>
<keyword id="KW-1133">Transmembrane helix</keyword>
<keyword id="KW-0813">Transport</keyword>
<gene>
    <name evidence="1" type="primary">atpF1</name>
    <name type="ordered locus">RD1_1325</name>
</gene>
<evidence type="ECO:0000255" key="1">
    <source>
        <dbReference type="HAMAP-Rule" id="MF_01398"/>
    </source>
</evidence>
<protein>
    <recommendedName>
        <fullName evidence="1">ATP synthase subunit b 1</fullName>
    </recommendedName>
    <alternativeName>
        <fullName evidence="1">ATP synthase F(0) sector subunit b 1</fullName>
    </alternativeName>
    <alternativeName>
        <fullName evidence="1">ATPase subunit I 1</fullName>
    </alternativeName>
    <alternativeName>
        <fullName evidence="1">F-type ATPase subunit b 1</fullName>
        <shortName evidence="1">F-ATPase subunit b 1</shortName>
    </alternativeName>
</protein>
<organism>
    <name type="scientific">Roseobacter denitrificans (strain ATCC 33942 / OCh 114)</name>
    <name type="common">Erythrobacter sp. (strain OCh 114)</name>
    <name type="synonym">Roseobacter denitrificans</name>
    <dbReference type="NCBI Taxonomy" id="375451"/>
    <lineage>
        <taxon>Bacteria</taxon>
        <taxon>Pseudomonadati</taxon>
        <taxon>Pseudomonadota</taxon>
        <taxon>Alphaproteobacteria</taxon>
        <taxon>Rhodobacterales</taxon>
        <taxon>Roseobacteraceae</taxon>
        <taxon>Roseobacter</taxon>
    </lineage>
</organism>
<sequence length="188" mass="19984">MRNLSRLSVLALAMLAANPAFAAGGGISLKNTDFVVLLGLLVFIGILVYFKVPGMIGKMLDSRAEGIEAELNEARALREEAQSLLASYERKQREVQEQADRIVEAAKEEATIAAEQARADLEVSLARRMAAAEDQIASAQAAAIKEVRDQSVSIAIAAAQDVIAKQLTAADANALIDGAITEVEAKLH</sequence>
<dbReference type="EMBL" id="CP000362">
    <property type="protein sequence ID" value="ABG30968.1"/>
    <property type="molecule type" value="Genomic_DNA"/>
</dbReference>
<dbReference type="RefSeq" id="WP_011567588.1">
    <property type="nucleotide sequence ID" value="NC_008209.1"/>
</dbReference>
<dbReference type="SMR" id="Q16AM5"/>
<dbReference type="STRING" id="375451.RD1_1325"/>
<dbReference type="KEGG" id="rde:RD1_1325"/>
<dbReference type="eggNOG" id="COG0711">
    <property type="taxonomic scope" value="Bacteria"/>
</dbReference>
<dbReference type="HOGENOM" id="CLU_079215_6_2_5"/>
<dbReference type="OrthoDB" id="8479836at2"/>
<dbReference type="Proteomes" id="UP000007029">
    <property type="component" value="Chromosome"/>
</dbReference>
<dbReference type="GO" id="GO:0005886">
    <property type="term" value="C:plasma membrane"/>
    <property type="evidence" value="ECO:0007669"/>
    <property type="project" value="UniProtKB-SubCell"/>
</dbReference>
<dbReference type="GO" id="GO:0045259">
    <property type="term" value="C:proton-transporting ATP synthase complex"/>
    <property type="evidence" value="ECO:0007669"/>
    <property type="project" value="UniProtKB-KW"/>
</dbReference>
<dbReference type="GO" id="GO:0046933">
    <property type="term" value="F:proton-transporting ATP synthase activity, rotational mechanism"/>
    <property type="evidence" value="ECO:0007669"/>
    <property type="project" value="UniProtKB-UniRule"/>
</dbReference>
<dbReference type="GO" id="GO:0046961">
    <property type="term" value="F:proton-transporting ATPase activity, rotational mechanism"/>
    <property type="evidence" value="ECO:0007669"/>
    <property type="project" value="TreeGrafter"/>
</dbReference>
<dbReference type="CDD" id="cd06503">
    <property type="entry name" value="ATP-synt_Fo_b"/>
    <property type="match status" value="1"/>
</dbReference>
<dbReference type="HAMAP" id="MF_01398">
    <property type="entry name" value="ATP_synth_b_bprime"/>
    <property type="match status" value="1"/>
</dbReference>
<dbReference type="InterPro" id="IPR002146">
    <property type="entry name" value="ATP_synth_b/b'su_bac/chlpt"/>
</dbReference>
<dbReference type="InterPro" id="IPR050059">
    <property type="entry name" value="ATP_synthase_B_chain"/>
</dbReference>
<dbReference type="NCBIfam" id="NF009989">
    <property type="entry name" value="PRK13455.1"/>
    <property type="match status" value="1"/>
</dbReference>
<dbReference type="PANTHER" id="PTHR33445:SF1">
    <property type="entry name" value="ATP SYNTHASE SUBUNIT B"/>
    <property type="match status" value="1"/>
</dbReference>
<dbReference type="PANTHER" id="PTHR33445">
    <property type="entry name" value="ATP SYNTHASE SUBUNIT B', CHLOROPLASTIC"/>
    <property type="match status" value="1"/>
</dbReference>
<dbReference type="Pfam" id="PF00430">
    <property type="entry name" value="ATP-synt_B"/>
    <property type="match status" value="1"/>
</dbReference>
<feature type="chain" id="PRO_0000368731" description="ATP synthase subunit b 1">
    <location>
        <begin position="1"/>
        <end position="188"/>
    </location>
</feature>
<feature type="transmembrane region" description="Helical" evidence="1">
    <location>
        <begin position="7"/>
        <end position="27"/>
    </location>
</feature>
<reference key="1">
    <citation type="journal article" date="2007" name="J. Bacteriol.">
        <title>The complete genome sequence of Roseobacter denitrificans reveals a mixotrophic rather than photosynthetic metabolism.</title>
        <authorList>
            <person name="Swingley W.D."/>
            <person name="Sadekar S."/>
            <person name="Mastrian S.D."/>
            <person name="Matthies H.J."/>
            <person name="Hao J."/>
            <person name="Ramos H."/>
            <person name="Acharya C.R."/>
            <person name="Conrad A.L."/>
            <person name="Taylor H.L."/>
            <person name="Dejesa L.C."/>
            <person name="Shah M.K."/>
            <person name="O'Huallachain M.E."/>
            <person name="Lince M.T."/>
            <person name="Blankenship R.E."/>
            <person name="Beatty J.T."/>
            <person name="Touchman J.W."/>
        </authorList>
    </citation>
    <scope>NUCLEOTIDE SEQUENCE [LARGE SCALE GENOMIC DNA]</scope>
    <source>
        <strain>ATCC 33942 / OCh 114</strain>
    </source>
</reference>